<organism>
    <name type="scientific">Homo sapiens</name>
    <name type="common">Human</name>
    <dbReference type="NCBI Taxonomy" id="9606"/>
    <lineage>
        <taxon>Eukaryota</taxon>
        <taxon>Metazoa</taxon>
        <taxon>Chordata</taxon>
        <taxon>Craniata</taxon>
        <taxon>Vertebrata</taxon>
        <taxon>Euteleostomi</taxon>
        <taxon>Mammalia</taxon>
        <taxon>Eutheria</taxon>
        <taxon>Euarchontoglires</taxon>
        <taxon>Primates</taxon>
        <taxon>Haplorrhini</taxon>
        <taxon>Catarrhini</taxon>
        <taxon>Hominidae</taxon>
        <taxon>Homo</taxon>
    </lineage>
</organism>
<keyword id="KW-0002">3D-structure</keyword>
<keyword id="KW-0025">Alternative splicing</keyword>
<keyword id="KW-0156">Chromatin regulator</keyword>
<keyword id="KW-1017">Isopeptide bond</keyword>
<keyword id="KW-0496">Mitochondrion</keyword>
<keyword id="KW-0539">Nucleus</keyword>
<keyword id="KW-0597">Phosphoprotein</keyword>
<keyword id="KW-1267">Proteomics identification</keyword>
<keyword id="KW-1185">Reference proteome</keyword>
<keyword id="KW-0832">Ubl conjugation</keyword>
<protein>
    <recommendedName>
        <fullName>KAT8 regulatory NSL complex subunit 2</fullName>
    </recommendedName>
    <alternativeName>
        <fullName>NSL complex protein NSL2</fullName>
    </alternativeName>
    <alternativeName>
        <fullName>Non-specific lethal 2 homolog</fullName>
    </alternativeName>
</protein>
<sequence>MNRIRIHVLPTNRGRITPVPRSQEPLSCAFTHRPCSHPRLEGQEFCIKHILEDKNAPFKQCSYISTKNGKRCPNAAPKPEKKDGVSFCAEHVRRNALALHAQMKKTNPGPVGETLLCQLSSYAKTELGSQTPESSRSEASRILDEDSWSDGEQEPITVDQTWRGDPDSEADSIDSDQEDPLKHAGVYTAEEVALIMREKLIRLQSLYIDQFKRLQHLLKEKKRRYLHNRKVEHEALGSSLLTGPEGLLAKERENLKRLKCLRRYRQRYGVEALLHRQLKERRMLATDGAAQQAHTTRSSQRCLAFVDDVRCSNQSLPMTRHCLTHICQDTNQVLFKCCQGSEEVPCNKPVPVSLSEDPCCPLHFQLPPQMYKPEQVLSVPDDLEAGPMDLYLSAAELQPTESLPLEFSDDLDVVGDGMQCPPSPLLFDPSLTLEDHLVKEIAEDPVDILGQMQMAGDGCRSQGSRNSEKASAPLSQSGLATANGKPEPTSIS</sequence>
<comment type="function">
    <text evidence="2 7 8">Non-catalytic component of the NSL histone acetyltransferase complex, a multiprotein complex that mediates histone H4 acetylation at 'Lys-5'- and 'Lys-8' (H4K5ac and H4K8ac) at transcription start sites and promotes transcription initiation (PubMed:20018852, PubMed:33657400). Required for NSL complex stability and for transcription of intraciliary transport genes in both ciliated and non-ciliated cells by regulating histone H4 acetylation at 'Lys-5'- and 'Lys-12' (H4K5ac and H4K12ac) (By similarity). This is necessary for cilium assembly in ciliated cells and for organization of the microtubule cytoskeleton in non-ciliated cells (By similarity). Required within the NSL complex to maintain nuclear architecture stability by promoting KAT8-mediated acetylation of lamin LMNA (By similarity).</text>
</comment>
<comment type="subunit">
    <text evidence="6 7 8">Component of the NSL complex at least composed of KAT8/MOF, KANSL1, KANSL2, KANSL3, MCRS1, PHF20, OGT1/OGT, WDR5 and HCFC1.</text>
</comment>
<comment type="interaction">
    <interactant intactId="EBI-2560840">
        <id>Q9H9L4</id>
    </interactant>
    <interactant intactId="EBI-540834">
        <id>P61964</id>
        <label>WDR5</label>
    </interactant>
    <organismsDiffer>false</organismsDiffer>
    <experiments>4</experiments>
</comment>
<comment type="subcellular location">
    <subcellularLocation>
        <location evidence="7">Nucleus</location>
    </subcellularLocation>
    <subcellularLocation>
        <location evidence="2">Mitochondrion</location>
    </subcellularLocation>
</comment>
<comment type="alternative products">
    <event type="alternative splicing"/>
    <isoform>
        <id>Q9H9L4-1</id>
        <name>1</name>
        <sequence type="displayed"/>
    </isoform>
    <isoform>
        <id>Q9H9L4-4</id>
        <name>2</name>
        <sequence type="described" ref="VSP_042530 VSP_042531"/>
    </isoform>
</comment>
<comment type="miscellaneous">
    <molecule>Isoform 2</molecule>
    <text evidence="11">May be produced at very low levels due to a premature stop codon in the mRNA, leading to nonsense-mediated mRNA decay.</text>
</comment>
<comment type="sequence caution" evidence="11">
    <conflict type="erroneous initiation">
        <sequence resource="EMBL-CDS" id="AAH09746"/>
    </conflict>
    <text>Truncated N-terminus.</text>
</comment>
<comment type="sequence caution" evidence="11">
    <conflict type="erroneous initiation">
        <sequence resource="EMBL-CDS" id="AAH13900"/>
    </conflict>
    <text>Truncated N-terminus.</text>
</comment>
<comment type="sequence caution" evidence="11">
    <conflict type="erroneous translation">
        <sequence resource="EMBL-CDS" id="BAA91169"/>
    </conflict>
    <text>Wrong choice of CDS.</text>
</comment>
<comment type="sequence caution" evidence="11">
    <conflict type="erroneous initiation">
        <sequence resource="EMBL-CDS" id="BAB14211"/>
    </conflict>
    <text>Truncated N-terminus.</text>
</comment>
<comment type="sequence caution" evidence="11">
    <conflict type="erroneous translation">
        <sequence resource="EMBL-CDS" id="CAD39126"/>
    </conflict>
    <text>Wrong choice of CDS.</text>
</comment>
<dbReference type="EMBL" id="AK000443">
    <property type="protein sequence ID" value="BAA91169.1"/>
    <property type="status" value="ALT_SEQ"/>
    <property type="molecule type" value="mRNA"/>
</dbReference>
<dbReference type="EMBL" id="AK022732">
    <property type="protein sequence ID" value="BAB14211.1"/>
    <property type="status" value="ALT_INIT"/>
    <property type="molecule type" value="mRNA"/>
</dbReference>
<dbReference type="EMBL" id="AL834467">
    <property type="protein sequence ID" value="CAD39126.1"/>
    <property type="status" value="ALT_SEQ"/>
    <property type="molecule type" value="mRNA"/>
</dbReference>
<dbReference type="EMBL" id="AC079951">
    <property type="status" value="NOT_ANNOTATED_CDS"/>
    <property type="molecule type" value="Genomic_DNA"/>
</dbReference>
<dbReference type="EMBL" id="BC009746">
    <property type="protein sequence ID" value="AAH09746.1"/>
    <property type="status" value="ALT_INIT"/>
    <property type="molecule type" value="mRNA"/>
</dbReference>
<dbReference type="EMBL" id="BC013900">
    <property type="protein sequence ID" value="AAH13900.1"/>
    <property type="status" value="ALT_INIT"/>
    <property type="molecule type" value="mRNA"/>
</dbReference>
<dbReference type="CCDS" id="CCDS44869.1">
    <molecule id="Q9H9L4-1"/>
</dbReference>
<dbReference type="RefSeq" id="NP_060292.3">
    <molecule id="Q9H9L4-1"/>
    <property type="nucleotide sequence ID" value="NM_017822.3"/>
</dbReference>
<dbReference type="PDB" id="4CY2">
    <property type="method" value="X-ray"/>
    <property type="resolution" value="2.00 A"/>
    <property type="chains" value="C=406-417"/>
</dbReference>
<dbReference type="PDBsum" id="4CY2"/>
<dbReference type="SMR" id="Q9H9L4"/>
<dbReference type="BioGRID" id="120274">
    <property type="interactions" value="74"/>
</dbReference>
<dbReference type="ComplexPortal" id="CPX-809">
    <property type="entry name" value="NSL histone acetyltransferase complex"/>
</dbReference>
<dbReference type="CORUM" id="Q9H9L4"/>
<dbReference type="FunCoup" id="Q9H9L4">
    <property type="interactions" value="3166"/>
</dbReference>
<dbReference type="IntAct" id="Q9H9L4">
    <property type="interactions" value="41"/>
</dbReference>
<dbReference type="MINT" id="Q9H9L4"/>
<dbReference type="STRING" id="9606.ENSP00000415436"/>
<dbReference type="GlyGen" id="Q9H9L4">
    <property type="glycosylation" value="1 site, 1 O-linked glycan (1 site)"/>
</dbReference>
<dbReference type="iPTMnet" id="Q9H9L4"/>
<dbReference type="PhosphoSitePlus" id="Q9H9L4"/>
<dbReference type="BioMuta" id="KANSL2"/>
<dbReference type="DMDM" id="296439400"/>
<dbReference type="jPOST" id="Q9H9L4"/>
<dbReference type="MassIVE" id="Q9H9L4"/>
<dbReference type="PaxDb" id="9606-ENSP00000415436"/>
<dbReference type="PeptideAtlas" id="Q9H9L4"/>
<dbReference type="ProteomicsDB" id="81329">
    <molecule id="Q9H9L4-1"/>
</dbReference>
<dbReference type="ProteomicsDB" id="81330">
    <molecule id="Q9H9L4-4"/>
</dbReference>
<dbReference type="Pumba" id="Q9H9L4"/>
<dbReference type="Antibodypedia" id="49479">
    <property type="antibodies" value="63 antibodies from 13 providers"/>
</dbReference>
<dbReference type="DNASU" id="54934"/>
<dbReference type="Ensembl" id="ENST00000420613.7">
    <molecule id="Q9H9L4-1"/>
    <property type="protein sequence ID" value="ENSP00000415436.3"/>
    <property type="gene ID" value="ENSG00000139620.13"/>
</dbReference>
<dbReference type="Ensembl" id="ENST00000546701.5">
    <molecule id="Q9H9L4-4"/>
    <property type="protein sequence ID" value="ENSP00000448131.1"/>
    <property type="gene ID" value="ENSG00000139620.13"/>
</dbReference>
<dbReference type="GeneID" id="54934"/>
<dbReference type="KEGG" id="hsa:54934"/>
<dbReference type="MANE-Select" id="ENST00000420613.7">
    <property type="protein sequence ID" value="ENSP00000415436.3"/>
    <property type="RefSeq nucleotide sequence ID" value="NM_017822.4"/>
    <property type="RefSeq protein sequence ID" value="NP_060292.3"/>
</dbReference>
<dbReference type="UCSC" id="uc001rrx.4">
    <molecule id="Q9H9L4-1"/>
    <property type="organism name" value="human"/>
</dbReference>
<dbReference type="AGR" id="HGNC:26024"/>
<dbReference type="CTD" id="54934"/>
<dbReference type="DisGeNET" id="54934"/>
<dbReference type="GeneCards" id="KANSL2"/>
<dbReference type="HGNC" id="HGNC:26024">
    <property type="gene designation" value="KANSL2"/>
</dbReference>
<dbReference type="HPA" id="ENSG00000139620">
    <property type="expression patterns" value="Low tissue specificity"/>
</dbReference>
<dbReference type="MIM" id="615488">
    <property type="type" value="gene"/>
</dbReference>
<dbReference type="neXtProt" id="NX_Q9H9L4"/>
<dbReference type="OpenTargets" id="ENSG00000139620"/>
<dbReference type="PharmGKB" id="PA143485371"/>
<dbReference type="VEuPathDB" id="HostDB:ENSG00000139620"/>
<dbReference type="eggNOG" id="ENOG502QTMA">
    <property type="taxonomic scope" value="Eukaryota"/>
</dbReference>
<dbReference type="GeneTree" id="ENSGT00940000155808"/>
<dbReference type="HOGENOM" id="CLU_029808_1_1_1"/>
<dbReference type="InParanoid" id="Q9H9L4"/>
<dbReference type="OrthoDB" id="677315at2759"/>
<dbReference type="PAN-GO" id="Q9H9L4">
    <property type="GO annotations" value="4 GO annotations based on evolutionary models"/>
</dbReference>
<dbReference type="PhylomeDB" id="Q9H9L4"/>
<dbReference type="TreeFam" id="TF324169"/>
<dbReference type="PathwayCommons" id="Q9H9L4"/>
<dbReference type="Reactome" id="R-HSA-3214847">
    <property type="pathway name" value="HATs acetylate histones"/>
</dbReference>
<dbReference type="Reactome" id="R-HSA-9772755">
    <property type="pathway name" value="Formation of WDR5-containing histone-modifying complexes"/>
</dbReference>
<dbReference type="SignaLink" id="Q9H9L4"/>
<dbReference type="SIGNOR" id="Q9H9L4"/>
<dbReference type="BioGRID-ORCS" id="54934">
    <property type="hits" value="750 hits in 1168 CRISPR screens"/>
</dbReference>
<dbReference type="ChiTaRS" id="KANSL2">
    <property type="organism name" value="human"/>
</dbReference>
<dbReference type="EvolutionaryTrace" id="Q9H9L4"/>
<dbReference type="GeneWiki" id="C12orf41"/>
<dbReference type="GenomeRNAi" id="54934"/>
<dbReference type="Pharos" id="Q9H9L4">
    <property type="development level" value="Tbio"/>
</dbReference>
<dbReference type="PRO" id="PR:Q9H9L4"/>
<dbReference type="Proteomes" id="UP000005640">
    <property type="component" value="Chromosome 12"/>
</dbReference>
<dbReference type="RNAct" id="Q9H9L4">
    <property type="molecule type" value="protein"/>
</dbReference>
<dbReference type="Bgee" id="ENSG00000139620">
    <property type="expression patterns" value="Expressed in skeletal muscle tissue and 101 other cell types or tissues"/>
</dbReference>
<dbReference type="ExpressionAtlas" id="Q9H9L4">
    <property type="expression patterns" value="baseline and differential"/>
</dbReference>
<dbReference type="GO" id="GO:0015629">
    <property type="term" value="C:actin cytoskeleton"/>
    <property type="evidence" value="ECO:0000314"/>
    <property type="project" value="HPA"/>
</dbReference>
<dbReference type="GO" id="GO:0005829">
    <property type="term" value="C:cytosol"/>
    <property type="evidence" value="ECO:0000314"/>
    <property type="project" value="HPA"/>
</dbReference>
<dbReference type="GO" id="GO:0000123">
    <property type="term" value="C:histone acetyltransferase complex"/>
    <property type="evidence" value="ECO:0000314"/>
    <property type="project" value="UniProtKB"/>
</dbReference>
<dbReference type="GO" id="GO:0005739">
    <property type="term" value="C:mitochondrion"/>
    <property type="evidence" value="ECO:0007669"/>
    <property type="project" value="UniProtKB-SubCell"/>
</dbReference>
<dbReference type="GO" id="GO:0044545">
    <property type="term" value="C:NSL complex"/>
    <property type="evidence" value="ECO:0000314"/>
    <property type="project" value="ComplexPortal"/>
</dbReference>
<dbReference type="GO" id="GO:0005654">
    <property type="term" value="C:nucleoplasm"/>
    <property type="evidence" value="ECO:0000314"/>
    <property type="project" value="HPA"/>
</dbReference>
<dbReference type="GO" id="GO:0005886">
    <property type="term" value="C:plasma membrane"/>
    <property type="evidence" value="ECO:0000314"/>
    <property type="project" value="HPA"/>
</dbReference>
<dbReference type="GO" id="GO:0006325">
    <property type="term" value="P:chromatin organization"/>
    <property type="evidence" value="ECO:0007669"/>
    <property type="project" value="UniProtKB-KW"/>
</dbReference>
<dbReference type="GO" id="GO:0045893">
    <property type="term" value="P:positive regulation of DNA-templated transcription"/>
    <property type="evidence" value="ECO:0000303"/>
    <property type="project" value="ComplexPortal"/>
</dbReference>
<dbReference type="InterPro" id="IPR026316">
    <property type="entry name" value="NSL2"/>
</dbReference>
<dbReference type="InterPro" id="IPR025927">
    <property type="entry name" value="Potential_DNA-bd"/>
</dbReference>
<dbReference type="PANTHER" id="PTHR13453">
    <property type="entry name" value="KAT8 REGULATORY NSL COMPLEX SUBUNIT 2"/>
    <property type="match status" value="1"/>
</dbReference>
<dbReference type="PANTHER" id="PTHR13453:SF1">
    <property type="entry name" value="KAT8 REGULATORY NSL COMPLEX SUBUNIT 2"/>
    <property type="match status" value="1"/>
</dbReference>
<dbReference type="Pfam" id="PF13891">
    <property type="entry name" value="zf-C3Hc3H"/>
    <property type="match status" value="2"/>
</dbReference>
<name>KANL2_HUMAN</name>
<evidence type="ECO:0000250" key="1">
    <source>
        <dbReference type="UniProtKB" id="Q6AY70"/>
    </source>
</evidence>
<evidence type="ECO:0000250" key="2">
    <source>
        <dbReference type="UniProtKB" id="Q8BQR4"/>
    </source>
</evidence>
<evidence type="ECO:0000256" key="3">
    <source>
        <dbReference type="SAM" id="MobiDB-lite"/>
    </source>
</evidence>
<evidence type="ECO:0000269" key="4">
    <source>
    </source>
</evidence>
<evidence type="ECO:0000269" key="5">
    <source>
    </source>
</evidence>
<evidence type="ECO:0000269" key="6">
    <source>
    </source>
</evidence>
<evidence type="ECO:0000269" key="7">
    <source>
    </source>
</evidence>
<evidence type="ECO:0000269" key="8">
    <source>
    </source>
</evidence>
<evidence type="ECO:0000303" key="9">
    <source>
    </source>
</evidence>
<evidence type="ECO:0000303" key="10">
    <source>
    </source>
</evidence>
<evidence type="ECO:0000305" key="11"/>
<evidence type="ECO:0007744" key="12">
    <source>
    </source>
</evidence>
<evidence type="ECO:0007744" key="13">
    <source>
    </source>
</evidence>
<evidence type="ECO:0007744" key="14">
    <source>
    </source>
</evidence>
<evidence type="ECO:0007744" key="15">
    <source>
    </source>
</evidence>
<evidence type="ECO:0007744" key="16">
    <source>
    </source>
</evidence>
<proteinExistence type="evidence at protein level"/>
<reference key="1">
    <citation type="journal article" date="2004" name="Nat. Genet.">
        <title>Complete sequencing and characterization of 21,243 full-length human cDNAs.</title>
        <authorList>
            <person name="Ota T."/>
            <person name="Suzuki Y."/>
            <person name="Nishikawa T."/>
            <person name="Otsuki T."/>
            <person name="Sugiyama T."/>
            <person name="Irie R."/>
            <person name="Wakamatsu A."/>
            <person name="Hayashi K."/>
            <person name="Sato H."/>
            <person name="Nagai K."/>
            <person name="Kimura K."/>
            <person name="Makita H."/>
            <person name="Sekine M."/>
            <person name="Obayashi M."/>
            <person name="Nishi T."/>
            <person name="Shibahara T."/>
            <person name="Tanaka T."/>
            <person name="Ishii S."/>
            <person name="Yamamoto J."/>
            <person name="Saito K."/>
            <person name="Kawai Y."/>
            <person name="Isono Y."/>
            <person name="Nakamura Y."/>
            <person name="Nagahari K."/>
            <person name="Murakami K."/>
            <person name="Yasuda T."/>
            <person name="Iwayanagi T."/>
            <person name="Wagatsuma M."/>
            <person name="Shiratori A."/>
            <person name="Sudo H."/>
            <person name="Hosoiri T."/>
            <person name="Kaku Y."/>
            <person name="Kodaira H."/>
            <person name="Kondo H."/>
            <person name="Sugawara M."/>
            <person name="Takahashi M."/>
            <person name="Kanda K."/>
            <person name="Yokoi T."/>
            <person name="Furuya T."/>
            <person name="Kikkawa E."/>
            <person name="Omura Y."/>
            <person name="Abe K."/>
            <person name="Kamihara K."/>
            <person name="Katsuta N."/>
            <person name="Sato K."/>
            <person name="Tanikawa M."/>
            <person name="Yamazaki M."/>
            <person name="Ninomiya K."/>
            <person name="Ishibashi T."/>
            <person name="Yamashita H."/>
            <person name="Murakawa K."/>
            <person name="Fujimori K."/>
            <person name="Tanai H."/>
            <person name="Kimata M."/>
            <person name="Watanabe M."/>
            <person name="Hiraoka S."/>
            <person name="Chiba Y."/>
            <person name="Ishida S."/>
            <person name="Ono Y."/>
            <person name="Takiguchi S."/>
            <person name="Watanabe S."/>
            <person name="Yosida M."/>
            <person name="Hotuta T."/>
            <person name="Kusano J."/>
            <person name="Kanehori K."/>
            <person name="Takahashi-Fujii A."/>
            <person name="Hara H."/>
            <person name="Tanase T.-O."/>
            <person name="Nomura Y."/>
            <person name="Togiya S."/>
            <person name="Komai F."/>
            <person name="Hara R."/>
            <person name="Takeuchi K."/>
            <person name="Arita M."/>
            <person name="Imose N."/>
            <person name="Musashino K."/>
            <person name="Yuuki H."/>
            <person name="Oshima A."/>
            <person name="Sasaki N."/>
            <person name="Aotsuka S."/>
            <person name="Yoshikawa Y."/>
            <person name="Matsunawa H."/>
            <person name="Ichihara T."/>
            <person name="Shiohata N."/>
            <person name="Sano S."/>
            <person name="Moriya S."/>
            <person name="Momiyama H."/>
            <person name="Satoh N."/>
            <person name="Takami S."/>
            <person name="Terashima Y."/>
            <person name="Suzuki O."/>
            <person name="Nakagawa S."/>
            <person name="Senoh A."/>
            <person name="Mizoguchi H."/>
            <person name="Goto Y."/>
            <person name="Shimizu F."/>
            <person name="Wakebe H."/>
            <person name="Hishigaki H."/>
            <person name="Watanabe T."/>
            <person name="Sugiyama A."/>
            <person name="Takemoto M."/>
            <person name="Kawakami B."/>
            <person name="Yamazaki M."/>
            <person name="Watanabe K."/>
            <person name="Kumagai A."/>
            <person name="Itakura S."/>
            <person name="Fukuzumi Y."/>
            <person name="Fujimori Y."/>
            <person name="Komiyama M."/>
            <person name="Tashiro H."/>
            <person name="Tanigami A."/>
            <person name="Fujiwara T."/>
            <person name="Ono T."/>
            <person name="Yamada K."/>
            <person name="Fujii Y."/>
            <person name="Ozaki K."/>
            <person name="Hirao M."/>
            <person name="Ohmori Y."/>
            <person name="Kawabata A."/>
            <person name="Hikiji T."/>
            <person name="Kobatake N."/>
            <person name="Inagaki H."/>
            <person name="Ikema Y."/>
            <person name="Okamoto S."/>
            <person name="Okitani R."/>
            <person name="Kawakami T."/>
            <person name="Noguchi S."/>
            <person name="Itoh T."/>
            <person name="Shigeta K."/>
            <person name="Senba T."/>
            <person name="Matsumura K."/>
            <person name="Nakajima Y."/>
            <person name="Mizuno T."/>
            <person name="Morinaga M."/>
            <person name="Sasaki M."/>
            <person name="Togashi T."/>
            <person name="Oyama M."/>
            <person name="Hata H."/>
            <person name="Watanabe M."/>
            <person name="Komatsu T."/>
            <person name="Mizushima-Sugano J."/>
            <person name="Satoh T."/>
            <person name="Shirai Y."/>
            <person name="Takahashi Y."/>
            <person name="Nakagawa K."/>
            <person name="Okumura K."/>
            <person name="Nagase T."/>
            <person name="Nomura N."/>
            <person name="Kikuchi H."/>
            <person name="Masuho Y."/>
            <person name="Yamashita R."/>
            <person name="Nakai K."/>
            <person name="Yada T."/>
            <person name="Nakamura Y."/>
            <person name="Ohara O."/>
            <person name="Isogai T."/>
            <person name="Sugano S."/>
        </authorList>
    </citation>
    <scope>NUCLEOTIDE SEQUENCE [LARGE SCALE MRNA] (ISOFORM 2)</scope>
    <scope>NUCLEOTIDE SEQUENCE [LARGE SCALE MRNA] OF 64-492 (ISOFORM 1)</scope>
    <scope>VARIANT THR-445</scope>
</reference>
<reference key="2">
    <citation type="journal article" date="2007" name="BMC Genomics">
        <title>The full-ORF clone resource of the German cDNA consortium.</title>
        <authorList>
            <person name="Bechtel S."/>
            <person name="Rosenfelder H."/>
            <person name="Duda A."/>
            <person name="Schmidt C.P."/>
            <person name="Ernst U."/>
            <person name="Wellenreuther R."/>
            <person name="Mehrle A."/>
            <person name="Schuster C."/>
            <person name="Bahr A."/>
            <person name="Bloecker H."/>
            <person name="Heubner D."/>
            <person name="Hoerlein A."/>
            <person name="Michel G."/>
            <person name="Wedler H."/>
            <person name="Koehrer K."/>
            <person name="Ottenwaelder B."/>
            <person name="Poustka A."/>
            <person name="Wiemann S."/>
            <person name="Schupp I."/>
        </authorList>
    </citation>
    <scope>NUCLEOTIDE SEQUENCE [LARGE SCALE MRNA] (ISOFORM 2)</scope>
    <source>
        <tissue>Melanoma</tissue>
    </source>
</reference>
<reference key="3">
    <citation type="journal article" date="2006" name="Nature">
        <title>The finished DNA sequence of human chromosome 12.</title>
        <authorList>
            <person name="Scherer S.E."/>
            <person name="Muzny D.M."/>
            <person name="Buhay C.J."/>
            <person name="Chen R."/>
            <person name="Cree A."/>
            <person name="Ding Y."/>
            <person name="Dugan-Rocha S."/>
            <person name="Gill R."/>
            <person name="Gunaratne P."/>
            <person name="Harris R.A."/>
            <person name="Hawes A.C."/>
            <person name="Hernandez J."/>
            <person name="Hodgson A.V."/>
            <person name="Hume J."/>
            <person name="Jackson A."/>
            <person name="Khan Z.M."/>
            <person name="Kovar-Smith C."/>
            <person name="Lewis L.R."/>
            <person name="Lozado R.J."/>
            <person name="Metzker M.L."/>
            <person name="Milosavljevic A."/>
            <person name="Miner G.R."/>
            <person name="Montgomery K.T."/>
            <person name="Morgan M.B."/>
            <person name="Nazareth L.V."/>
            <person name="Scott G."/>
            <person name="Sodergren E."/>
            <person name="Song X.-Z."/>
            <person name="Steffen D."/>
            <person name="Lovering R.C."/>
            <person name="Wheeler D.A."/>
            <person name="Worley K.C."/>
            <person name="Yuan Y."/>
            <person name="Zhang Z."/>
            <person name="Adams C.Q."/>
            <person name="Ansari-Lari M.A."/>
            <person name="Ayele M."/>
            <person name="Brown M.J."/>
            <person name="Chen G."/>
            <person name="Chen Z."/>
            <person name="Clerc-Blankenburg K.P."/>
            <person name="Davis C."/>
            <person name="Delgado O."/>
            <person name="Dinh H.H."/>
            <person name="Draper H."/>
            <person name="Gonzalez-Garay M.L."/>
            <person name="Havlak P."/>
            <person name="Jackson L.R."/>
            <person name="Jacob L.S."/>
            <person name="Kelly S.H."/>
            <person name="Li L."/>
            <person name="Li Z."/>
            <person name="Liu J."/>
            <person name="Liu W."/>
            <person name="Lu J."/>
            <person name="Maheshwari M."/>
            <person name="Nguyen B.-V."/>
            <person name="Okwuonu G.O."/>
            <person name="Pasternak S."/>
            <person name="Perez L.M."/>
            <person name="Plopper F.J.H."/>
            <person name="Santibanez J."/>
            <person name="Shen H."/>
            <person name="Tabor P.E."/>
            <person name="Verduzco D."/>
            <person name="Waldron L."/>
            <person name="Wang Q."/>
            <person name="Williams G.A."/>
            <person name="Zhang J."/>
            <person name="Zhou J."/>
            <person name="Allen C.C."/>
            <person name="Amin A.G."/>
            <person name="Anyalebechi V."/>
            <person name="Bailey M."/>
            <person name="Barbaria J.A."/>
            <person name="Bimage K.E."/>
            <person name="Bryant N.P."/>
            <person name="Burch P.E."/>
            <person name="Burkett C.E."/>
            <person name="Burrell K.L."/>
            <person name="Calderon E."/>
            <person name="Cardenas V."/>
            <person name="Carter K."/>
            <person name="Casias K."/>
            <person name="Cavazos I."/>
            <person name="Cavazos S.R."/>
            <person name="Ceasar H."/>
            <person name="Chacko J."/>
            <person name="Chan S.N."/>
            <person name="Chavez D."/>
            <person name="Christopoulos C."/>
            <person name="Chu J."/>
            <person name="Cockrell R."/>
            <person name="Cox C.D."/>
            <person name="Dang M."/>
            <person name="Dathorne S.R."/>
            <person name="David R."/>
            <person name="Davis C.M."/>
            <person name="Davy-Carroll L."/>
            <person name="Deshazo D.R."/>
            <person name="Donlin J.E."/>
            <person name="D'Souza L."/>
            <person name="Eaves K.A."/>
            <person name="Egan A."/>
            <person name="Emery-Cohen A.J."/>
            <person name="Escotto M."/>
            <person name="Flagg N."/>
            <person name="Forbes L.D."/>
            <person name="Gabisi A.M."/>
            <person name="Garza M."/>
            <person name="Hamilton C."/>
            <person name="Henderson N."/>
            <person name="Hernandez O."/>
            <person name="Hines S."/>
            <person name="Hogues M.E."/>
            <person name="Huang M."/>
            <person name="Idlebird D.G."/>
            <person name="Johnson R."/>
            <person name="Jolivet A."/>
            <person name="Jones S."/>
            <person name="Kagan R."/>
            <person name="King L.M."/>
            <person name="Leal B."/>
            <person name="Lebow H."/>
            <person name="Lee S."/>
            <person name="LeVan J.M."/>
            <person name="Lewis L.C."/>
            <person name="London P."/>
            <person name="Lorensuhewa L.M."/>
            <person name="Loulseged H."/>
            <person name="Lovett D.A."/>
            <person name="Lucier A."/>
            <person name="Lucier R.L."/>
            <person name="Ma J."/>
            <person name="Madu R.C."/>
            <person name="Mapua P."/>
            <person name="Martindale A.D."/>
            <person name="Martinez E."/>
            <person name="Massey E."/>
            <person name="Mawhiney S."/>
            <person name="Meador M.G."/>
            <person name="Mendez S."/>
            <person name="Mercado C."/>
            <person name="Mercado I.C."/>
            <person name="Merritt C.E."/>
            <person name="Miner Z.L."/>
            <person name="Minja E."/>
            <person name="Mitchell T."/>
            <person name="Mohabbat F."/>
            <person name="Mohabbat K."/>
            <person name="Montgomery B."/>
            <person name="Moore N."/>
            <person name="Morris S."/>
            <person name="Munidasa M."/>
            <person name="Ngo R.N."/>
            <person name="Nguyen N.B."/>
            <person name="Nickerson E."/>
            <person name="Nwaokelemeh O.O."/>
            <person name="Nwokenkwo S."/>
            <person name="Obregon M."/>
            <person name="Oguh M."/>
            <person name="Oragunye N."/>
            <person name="Oviedo R.J."/>
            <person name="Parish B.J."/>
            <person name="Parker D.N."/>
            <person name="Parrish J."/>
            <person name="Parks K.L."/>
            <person name="Paul H.A."/>
            <person name="Payton B.A."/>
            <person name="Perez A."/>
            <person name="Perrin W."/>
            <person name="Pickens A."/>
            <person name="Primus E.L."/>
            <person name="Pu L.-L."/>
            <person name="Puazo M."/>
            <person name="Quiles M.M."/>
            <person name="Quiroz J.B."/>
            <person name="Rabata D."/>
            <person name="Reeves K."/>
            <person name="Ruiz S.J."/>
            <person name="Shao H."/>
            <person name="Sisson I."/>
            <person name="Sonaike T."/>
            <person name="Sorelle R.P."/>
            <person name="Sutton A.E."/>
            <person name="Svatek A.F."/>
            <person name="Svetz L.A."/>
            <person name="Tamerisa K.S."/>
            <person name="Taylor T.R."/>
            <person name="Teague B."/>
            <person name="Thomas N."/>
            <person name="Thorn R.D."/>
            <person name="Trejos Z.Y."/>
            <person name="Trevino B.K."/>
            <person name="Ukegbu O.N."/>
            <person name="Urban J.B."/>
            <person name="Vasquez L.I."/>
            <person name="Vera V.A."/>
            <person name="Villasana D.M."/>
            <person name="Wang L."/>
            <person name="Ward-Moore S."/>
            <person name="Warren J.T."/>
            <person name="Wei X."/>
            <person name="White F."/>
            <person name="Williamson A.L."/>
            <person name="Wleczyk R."/>
            <person name="Wooden H.S."/>
            <person name="Wooden S.H."/>
            <person name="Yen J."/>
            <person name="Yoon L."/>
            <person name="Yoon V."/>
            <person name="Zorrilla S.E."/>
            <person name="Nelson D."/>
            <person name="Kucherlapati R."/>
            <person name="Weinstock G."/>
            <person name="Gibbs R.A."/>
        </authorList>
    </citation>
    <scope>NUCLEOTIDE SEQUENCE [LARGE SCALE GENOMIC DNA]</scope>
</reference>
<reference key="4">
    <citation type="journal article" date="2004" name="Genome Res.">
        <title>The status, quality, and expansion of the NIH full-length cDNA project: the Mammalian Gene Collection (MGC).</title>
        <authorList>
            <consortium name="The MGC Project Team"/>
        </authorList>
    </citation>
    <scope>NUCLEOTIDE SEQUENCE [LARGE SCALE MRNA] (ISOFORM 1)</scope>
    <scope>VARIANTS SER-313 AND THR-445</scope>
    <source>
        <tissue>Ovary</tissue>
        <tissue>Placenta</tissue>
    </source>
</reference>
<reference key="5">
    <citation type="journal article" date="2006" name="Mol. Cell">
        <title>Nuclear pore components are involved in the transcriptional regulation of dosage compensation in Drosophila.</title>
        <authorList>
            <person name="Mendjan S."/>
            <person name="Taipale M."/>
            <person name="Kind J."/>
            <person name="Holz H."/>
            <person name="Gebhardt P."/>
            <person name="Schelder M."/>
            <person name="Vermeulen M."/>
            <person name="Buscaino A."/>
            <person name="Duncan K."/>
            <person name="Mueller J."/>
            <person name="Wilm M."/>
            <person name="Stunnenberg H.G."/>
            <person name="Saumweber H."/>
            <person name="Akhtar A."/>
        </authorList>
    </citation>
    <scope>IDENTIFICATION IN THE NSL COMPLEX</scope>
</reference>
<reference key="6">
    <citation type="journal article" date="2010" name="J. Biol. Chem.">
        <title>Subunit composition and substrate specificity of a MOF-containing histone acetyltransferase distinct from the male-specific lethal (MSL) complex.</title>
        <authorList>
            <person name="Cai Y."/>
            <person name="Jin J."/>
            <person name="Swanson S.K."/>
            <person name="Cole M.D."/>
            <person name="Choi S.H."/>
            <person name="Florens L."/>
            <person name="Washburn M.P."/>
            <person name="Conaway J.W."/>
            <person name="Conaway R.C."/>
        </authorList>
    </citation>
    <scope>FUNCTION IN HISTONE H4 ACETYLATION</scope>
    <scope>IDENTIFICATION IN NSL COMPLEX</scope>
    <scope>SUBCELLULAR LOCATION</scope>
</reference>
<reference key="7">
    <citation type="journal article" date="2010" name="Sci. Signal.">
        <title>Quantitative phosphoproteomics reveals widespread full phosphorylation site occupancy during mitosis.</title>
        <authorList>
            <person name="Olsen J.V."/>
            <person name="Vermeulen M."/>
            <person name="Santamaria A."/>
            <person name="Kumar C."/>
            <person name="Miller M.L."/>
            <person name="Jensen L.J."/>
            <person name="Gnad F."/>
            <person name="Cox J."/>
            <person name="Jensen T.S."/>
            <person name="Nigg E.A."/>
            <person name="Brunak S."/>
            <person name="Mann M."/>
        </authorList>
    </citation>
    <scope>PHOSPHORYLATION [LARGE SCALE ANALYSIS] AT SER-147 AND SER-149</scope>
    <scope>IDENTIFICATION BY MASS SPECTROMETRY [LARGE SCALE ANALYSIS]</scope>
    <source>
        <tissue>Cervix carcinoma</tissue>
    </source>
</reference>
<reference key="8">
    <citation type="journal article" date="2011" name="Sci. Signal.">
        <title>System-wide temporal characterization of the proteome and phosphoproteome of human embryonic stem cell differentiation.</title>
        <authorList>
            <person name="Rigbolt K.T."/>
            <person name="Prokhorova T.A."/>
            <person name="Akimov V."/>
            <person name="Henningsen J."/>
            <person name="Johansen P.T."/>
            <person name="Kratchmarova I."/>
            <person name="Kassem M."/>
            <person name="Mann M."/>
            <person name="Olsen J.V."/>
            <person name="Blagoev B."/>
        </authorList>
    </citation>
    <scope>PHOSPHORYLATION [LARGE SCALE ANALYSIS] AT SER-147 AND SER-149</scope>
    <scope>IDENTIFICATION BY MASS SPECTROMETRY [LARGE SCALE ANALYSIS]</scope>
</reference>
<reference key="9">
    <citation type="journal article" date="2013" name="J. Proteome Res.">
        <title>Toward a comprehensive characterization of a human cancer cell phosphoproteome.</title>
        <authorList>
            <person name="Zhou H."/>
            <person name="Di Palma S."/>
            <person name="Preisinger C."/>
            <person name="Peng M."/>
            <person name="Polat A.N."/>
            <person name="Heck A.J."/>
            <person name="Mohammed S."/>
        </authorList>
    </citation>
    <scope>PHOSPHORYLATION [LARGE SCALE ANALYSIS] AT THR-131</scope>
    <scope>IDENTIFICATION BY MASS SPECTROMETRY [LARGE SCALE ANALYSIS]</scope>
    <source>
        <tissue>Cervix carcinoma</tissue>
    </source>
</reference>
<reference key="10">
    <citation type="journal article" date="2014" name="J. Proteomics">
        <title>An enzyme assisted RP-RPLC approach for in-depth analysis of human liver phosphoproteome.</title>
        <authorList>
            <person name="Bian Y."/>
            <person name="Song C."/>
            <person name="Cheng K."/>
            <person name="Dong M."/>
            <person name="Wang F."/>
            <person name="Huang J."/>
            <person name="Sun D."/>
            <person name="Wang L."/>
            <person name="Ye M."/>
            <person name="Zou H."/>
        </authorList>
    </citation>
    <scope>PHOSPHORYLATION [LARGE SCALE ANALYSIS] AT SER-149</scope>
    <scope>IDENTIFICATION BY MASS SPECTROMETRY [LARGE SCALE ANALYSIS]</scope>
    <source>
        <tissue>Liver</tissue>
    </source>
</reference>
<reference key="11">
    <citation type="journal article" date="2017" name="Nat. Struct. Mol. Biol.">
        <title>Site-specific mapping of the human SUMO proteome reveals co-modification with phosphorylation.</title>
        <authorList>
            <person name="Hendriks I.A."/>
            <person name="Lyon D."/>
            <person name="Young C."/>
            <person name="Jensen L.J."/>
            <person name="Vertegaal A.C."/>
            <person name="Nielsen M.L."/>
        </authorList>
    </citation>
    <scope>SUMOYLATION [LARGE SCALE ANALYSIS] AT LYS-78</scope>
    <scope>IDENTIFICATION BY MASS SPECTROMETRY [LARGE SCALE ANALYSIS]</scope>
</reference>
<reference key="12">
    <citation type="journal article" date="2021" name="Mol. Cell">
        <title>Complex-dependent histone acetyltransferase activity of KAT8 determines its role in transcription and cellular homeostasis.</title>
        <authorList>
            <person name="Radzisheuskaya A."/>
            <person name="Shliaha P.V."/>
            <person name="Grinev V.V."/>
            <person name="Shlyueva D."/>
            <person name="Damhofer H."/>
            <person name="Koche R."/>
            <person name="Gorshkov V."/>
            <person name="Kovalchuk S."/>
            <person name="Zhan Y."/>
            <person name="Rodriguez K.L."/>
            <person name="Johnstone A.L."/>
            <person name="Keogh M.C."/>
            <person name="Hendrickson R.C."/>
            <person name="Jensen O.N."/>
            <person name="Helin K."/>
        </authorList>
    </citation>
    <scope>FUNCTION</scope>
    <scope>IDENTIFICATION IN NSL COMPLEX</scope>
</reference>
<feature type="chain" id="PRO_0000278292" description="KAT8 regulatory NSL complex subunit 2">
    <location>
        <begin position="1"/>
        <end position="492"/>
    </location>
</feature>
<feature type="region of interest" description="Disordered" evidence="3">
    <location>
        <begin position="126"/>
        <end position="182"/>
    </location>
</feature>
<feature type="region of interest" description="Required for interaction with other NSL complex members" evidence="2">
    <location>
        <begin position="308"/>
        <end position="364"/>
    </location>
</feature>
<feature type="region of interest" description="Disordered" evidence="3">
    <location>
        <begin position="455"/>
        <end position="492"/>
    </location>
</feature>
<feature type="compositionally biased region" description="Basic and acidic residues" evidence="3">
    <location>
        <begin position="135"/>
        <end position="144"/>
    </location>
</feature>
<feature type="compositionally biased region" description="Acidic residues" evidence="3">
    <location>
        <begin position="167"/>
        <end position="178"/>
    </location>
</feature>
<feature type="modified residue" description="Phosphothreonine" evidence="14">
    <location>
        <position position="131"/>
    </location>
</feature>
<feature type="modified residue" description="Phosphoserine" evidence="12 13">
    <location>
        <position position="147"/>
    </location>
</feature>
<feature type="modified residue" description="Phosphoserine" evidence="12 13 15">
    <location>
        <position position="149"/>
    </location>
</feature>
<feature type="modified residue" description="Phosphoserine" evidence="1">
    <location>
        <position position="168"/>
    </location>
</feature>
<feature type="modified residue" description="Phosphoserine" evidence="1">
    <location>
        <position position="172"/>
    </location>
</feature>
<feature type="modified residue" description="Phosphoserine" evidence="1">
    <location>
        <position position="175"/>
    </location>
</feature>
<feature type="cross-link" description="Glycyl lysine isopeptide (Lys-Gly) (interchain with G-Cter in SUMO2)" evidence="16">
    <location>
        <position position="78"/>
    </location>
</feature>
<feature type="splice variant" id="VSP_042530" description="In isoform 2." evidence="9 10">
    <original>EDSWSDGEQEP</original>
    <variation>MLVSTQQKKWP</variation>
    <location>
        <begin position="145"/>
        <end position="155"/>
    </location>
</feature>
<feature type="splice variant" id="VSP_042531" description="In isoform 2." evidence="9 10">
    <location>
        <begin position="156"/>
        <end position="492"/>
    </location>
</feature>
<feature type="sequence variant" id="VAR_030767" description="In dbSNP:rs17238800." evidence="5">
    <original>N</original>
    <variation>S</variation>
    <location>
        <position position="313"/>
    </location>
</feature>
<feature type="sequence variant" id="VAR_030768" description="In dbSNP:rs3741628." evidence="4 5">
    <original>P</original>
    <variation>T</variation>
    <location>
        <position position="445"/>
    </location>
</feature>
<feature type="sequence conflict" description="In Ref. 1; BAA91169." evidence="11" ref="1">
    <original>P</original>
    <variation>L</variation>
    <location>
        <position position="108"/>
    </location>
</feature>
<gene>
    <name type="primary">KANSL2</name>
    <name type="synonym">C12orf41</name>
    <name type="synonym">NSL2</name>
</gene>
<accession>Q9H9L4</accession>
<accession>Q8N3B5</accession>
<accession>Q96CV0</accession>
<accession>Q9NX51</accession>